<protein>
    <recommendedName>
        <fullName>Photosystem I reaction center subunit VIII</fullName>
        <shortName>PSI-I</shortName>
    </recommendedName>
</protein>
<geneLocation type="chloroplast"/>
<comment type="function">
    <text evidence="1">May help in the organization of the PsaL subunit.</text>
</comment>
<comment type="subcellular location">
    <subcellularLocation>
        <location evidence="1">Plastid</location>
        <location evidence="1">Chloroplast thylakoid membrane</location>
        <topology evidence="1">Single-pass membrane protein</topology>
    </subcellularLocation>
</comment>
<comment type="similarity">
    <text evidence="3">Belongs to the PsaI family.</text>
</comment>
<gene>
    <name type="primary">psaI</name>
</gene>
<accession>P51387</accession>
<reference key="1">
    <citation type="journal article" date="1995" name="Plant Mol. Biol. Rep.">
        <title>Complete nucleotide sequence of the Porphyra purpurea chloroplast genome.</title>
        <authorList>
            <person name="Reith M.E."/>
            <person name="Munholland J."/>
        </authorList>
    </citation>
    <scope>NUCLEOTIDE SEQUENCE [LARGE SCALE GENOMIC DNA]</scope>
    <source>
        <strain>Avonport</strain>
    </source>
</reference>
<evidence type="ECO:0000250" key="1"/>
<evidence type="ECO:0000255" key="2"/>
<evidence type="ECO:0000305" key="3"/>
<keyword id="KW-0150">Chloroplast</keyword>
<keyword id="KW-0472">Membrane</keyword>
<keyword id="KW-0602">Photosynthesis</keyword>
<keyword id="KW-0603">Photosystem I</keyword>
<keyword id="KW-0934">Plastid</keyword>
<keyword id="KW-0793">Thylakoid</keyword>
<keyword id="KW-0812">Transmembrane</keyword>
<keyword id="KW-1133">Transmembrane helix</keyword>
<name>PSAI_PORPU</name>
<dbReference type="EMBL" id="U38804">
    <property type="protein sequence ID" value="AAC08273.1"/>
    <property type="molecule type" value="Genomic_DNA"/>
</dbReference>
<dbReference type="PIR" id="S73308">
    <property type="entry name" value="S73308"/>
</dbReference>
<dbReference type="RefSeq" id="NP_053997.1">
    <property type="nucleotide sequence ID" value="NC_000925.1"/>
</dbReference>
<dbReference type="SMR" id="P51387"/>
<dbReference type="GeneID" id="810028"/>
<dbReference type="GO" id="GO:0009535">
    <property type="term" value="C:chloroplast thylakoid membrane"/>
    <property type="evidence" value="ECO:0007669"/>
    <property type="project" value="UniProtKB-SubCell"/>
</dbReference>
<dbReference type="GO" id="GO:0009522">
    <property type="term" value="C:photosystem I"/>
    <property type="evidence" value="ECO:0007669"/>
    <property type="project" value="UniProtKB-KW"/>
</dbReference>
<dbReference type="GO" id="GO:0015979">
    <property type="term" value="P:photosynthesis"/>
    <property type="evidence" value="ECO:0007669"/>
    <property type="project" value="UniProtKB-UniRule"/>
</dbReference>
<dbReference type="HAMAP" id="MF_00431">
    <property type="entry name" value="PSI_PsaI"/>
    <property type="match status" value="1"/>
</dbReference>
<dbReference type="InterPro" id="IPR001302">
    <property type="entry name" value="PSI_PsaI"/>
</dbReference>
<dbReference type="InterPro" id="IPR036357">
    <property type="entry name" value="PSI_PsaI_sf"/>
</dbReference>
<dbReference type="NCBIfam" id="NF008830">
    <property type="entry name" value="PRK11877.1"/>
    <property type="match status" value="1"/>
</dbReference>
<dbReference type="NCBIfam" id="TIGR03052">
    <property type="entry name" value="PS_I_psaI"/>
    <property type="match status" value="1"/>
</dbReference>
<dbReference type="PANTHER" id="PTHR35775">
    <property type="match status" value="1"/>
</dbReference>
<dbReference type="PANTHER" id="PTHR35775:SF2">
    <property type="entry name" value="PHOTOSYSTEM I REACTION CENTER SUBUNIT VIII"/>
    <property type="match status" value="1"/>
</dbReference>
<dbReference type="Pfam" id="PF00796">
    <property type="entry name" value="PSI_8"/>
    <property type="match status" value="1"/>
</dbReference>
<dbReference type="SUPFAM" id="SSF81540">
    <property type="entry name" value="Subunit VIII of photosystem I reaction centre, PsaI"/>
    <property type="match status" value="1"/>
</dbReference>
<sequence>MTAAYLPSILVPLVGLIFPALGMALLFIYIERETIA</sequence>
<organism>
    <name type="scientific">Porphyra purpurea</name>
    <name type="common">Red seaweed</name>
    <name type="synonym">Ulva purpurea</name>
    <dbReference type="NCBI Taxonomy" id="2787"/>
    <lineage>
        <taxon>Eukaryota</taxon>
        <taxon>Rhodophyta</taxon>
        <taxon>Bangiophyceae</taxon>
        <taxon>Bangiales</taxon>
        <taxon>Bangiaceae</taxon>
        <taxon>Porphyra</taxon>
    </lineage>
</organism>
<feature type="chain" id="PRO_0000194672" description="Photosystem I reaction center subunit VIII">
    <location>
        <begin position="1"/>
        <end position="36"/>
    </location>
</feature>
<feature type="transmembrane region" description="Helical" evidence="2">
    <location>
        <begin position="10"/>
        <end position="30"/>
    </location>
</feature>
<proteinExistence type="inferred from homology"/>